<name>JIP5_LODEL</name>
<feature type="chain" id="PRO_0000333562" description="WD repeat-containing protein JIP5">
    <location>
        <begin position="1"/>
        <end position="584"/>
    </location>
</feature>
<feature type="repeat" description="WD 1">
    <location>
        <begin position="128"/>
        <end position="173"/>
    </location>
</feature>
<feature type="repeat" description="WD 2">
    <location>
        <begin position="180"/>
        <end position="219"/>
    </location>
</feature>
<feature type="repeat" description="WD 3">
    <location>
        <begin position="269"/>
        <end position="314"/>
    </location>
</feature>
<feature type="repeat" description="WD 4">
    <location>
        <begin position="378"/>
        <end position="415"/>
    </location>
</feature>
<feature type="region of interest" description="Disordered" evidence="2">
    <location>
        <begin position="409"/>
        <end position="497"/>
    </location>
</feature>
<feature type="region of interest" description="Disordered" evidence="2">
    <location>
        <begin position="516"/>
        <end position="563"/>
    </location>
</feature>
<feature type="compositionally biased region" description="Acidic residues" evidence="2">
    <location>
        <begin position="412"/>
        <end position="429"/>
    </location>
</feature>
<feature type="compositionally biased region" description="Acidic residues" evidence="2">
    <location>
        <begin position="450"/>
        <end position="460"/>
    </location>
</feature>
<feature type="compositionally biased region" description="Basic and acidic residues" evidence="2">
    <location>
        <begin position="483"/>
        <end position="493"/>
    </location>
</feature>
<feature type="compositionally biased region" description="Basic and acidic residues" evidence="2">
    <location>
        <begin position="528"/>
        <end position="552"/>
    </location>
</feature>
<accession>A5DSU5</accession>
<dbReference type="EMBL" id="CH981524">
    <property type="protein sequence ID" value="EDK42253.1"/>
    <property type="molecule type" value="Genomic_DNA"/>
</dbReference>
<dbReference type="RefSeq" id="XP_001527911.1">
    <property type="nucleotide sequence ID" value="XM_001527861.1"/>
</dbReference>
<dbReference type="SMR" id="A5DSU5"/>
<dbReference type="FunCoup" id="A5DSU5">
    <property type="interactions" value="109"/>
</dbReference>
<dbReference type="STRING" id="379508.A5DSU5"/>
<dbReference type="GeneID" id="5235894"/>
<dbReference type="KEGG" id="lel:PVL30_000422"/>
<dbReference type="VEuPathDB" id="FungiDB:LELG_00431"/>
<dbReference type="eggNOG" id="KOG2444">
    <property type="taxonomic scope" value="Eukaryota"/>
</dbReference>
<dbReference type="HOGENOM" id="CLU_035623_0_0_1"/>
<dbReference type="InParanoid" id="A5DSU5"/>
<dbReference type="OMA" id="DDNCIWC"/>
<dbReference type="OrthoDB" id="2288928at2759"/>
<dbReference type="Proteomes" id="UP000001996">
    <property type="component" value="Unassembled WGS sequence"/>
</dbReference>
<dbReference type="GO" id="GO:0005730">
    <property type="term" value="C:nucleolus"/>
    <property type="evidence" value="ECO:0007669"/>
    <property type="project" value="UniProtKB-SubCell"/>
</dbReference>
<dbReference type="GO" id="GO:0045943">
    <property type="term" value="P:positive regulation of transcription by RNA polymerase I"/>
    <property type="evidence" value="ECO:0007669"/>
    <property type="project" value="TreeGrafter"/>
</dbReference>
<dbReference type="GO" id="GO:0042273">
    <property type="term" value="P:ribosomal large subunit biogenesis"/>
    <property type="evidence" value="ECO:0007669"/>
    <property type="project" value="EnsemblFungi"/>
</dbReference>
<dbReference type="GO" id="GO:0006364">
    <property type="term" value="P:rRNA processing"/>
    <property type="evidence" value="ECO:0007669"/>
    <property type="project" value="TreeGrafter"/>
</dbReference>
<dbReference type="Gene3D" id="2.130.10.10">
    <property type="entry name" value="YVTN repeat-like/Quinoprotein amine dehydrogenase"/>
    <property type="match status" value="1"/>
</dbReference>
<dbReference type="InterPro" id="IPR015943">
    <property type="entry name" value="WD40/YVTN_repeat-like_dom_sf"/>
</dbReference>
<dbReference type="InterPro" id="IPR036322">
    <property type="entry name" value="WD40_repeat_dom_sf"/>
</dbReference>
<dbReference type="InterPro" id="IPR001680">
    <property type="entry name" value="WD40_rpt"/>
</dbReference>
<dbReference type="PANTHER" id="PTHR19924">
    <property type="entry name" value="UTP15 U3 SMALL NUCLEOLAR RNA-ASSOCIATED PROTEIN 15 FAMILY MEMBER"/>
    <property type="match status" value="1"/>
</dbReference>
<dbReference type="PANTHER" id="PTHR19924:SF31">
    <property type="entry name" value="WD REPEAT-CONTAINING PROTEIN JIP5"/>
    <property type="match status" value="1"/>
</dbReference>
<dbReference type="SMART" id="SM00320">
    <property type="entry name" value="WD40"/>
    <property type="match status" value="4"/>
</dbReference>
<dbReference type="SUPFAM" id="SSF50978">
    <property type="entry name" value="WD40 repeat-like"/>
    <property type="match status" value="1"/>
</dbReference>
<proteinExistence type="inferred from homology"/>
<reference key="1">
    <citation type="journal article" date="2009" name="Nature">
        <title>Evolution of pathogenicity and sexual reproduction in eight Candida genomes.</title>
        <authorList>
            <person name="Butler G."/>
            <person name="Rasmussen M.D."/>
            <person name="Lin M.F."/>
            <person name="Santos M.A.S."/>
            <person name="Sakthikumar S."/>
            <person name="Munro C.A."/>
            <person name="Rheinbay E."/>
            <person name="Grabherr M."/>
            <person name="Forche A."/>
            <person name="Reedy J.L."/>
            <person name="Agrafioti I."/>
            <person name="Arnaud M.B."/>
            <person name="Bates S."/>
            <person name="Brown A.J.P."/>
            <person name="Brunke S."/>
            <person name="Costanzo M.C."/>
            <person name="Fitzpatrick D.A."/>
            <person name="de Groot P.W.J."/>
            <person name="Harris D."/>
            <person name="Hoyer L.L."/>
            <person name="Hube B."/>
            <person name="Klis F.M."/>
            <person name="Kodira C."/>
            <person name="Lennard N."/>
            <person name="Logue M.E."/>
            <person name="Martin R."/>
            <person name="Neiman A.M."/>
            <person name="Nikolaou E."/>
            <person name="Quail M.A."/>
            <person name="Quinn J."/>
            <person name="Santos M.C."/>
            <person name="Schmitzberger F.F."/>
            <person name="Sherlock G."/>
            <person name="Shah P."/>
            <person name="Silverstein K.A.T."/>
            <person name="Skrzypek M.S."/>
            <person name="Soll D."/>
            <person name="Staggs R."/>
            <person name="Stansfield I."/>
            <person name="Stumpf M.P.H."/>
            <person name="Sudbery P.E."/>
            <person name="Srikantha T."/>
            <person name="Zeng Q."/>
            <person name="Berman J."/>
            <person name="Berriman M."/>
            <person name="Heitman J."/>
            <person name="Gow N.A.R."/>
            <person name="Lorenz M.C."/>
            <person name="Birren B.W."/>
            <person name="Kellis M."/>
            <person name="Cuomo C.A."/>
        </authorList>
    </citation>
    <scope>NUCLEOTIDE SEQUENCE [LARGE SCALE GENOMIC DNA]</scope>
    <source>
        <strain>ATCC 11503 / BCRC 21390 / CBS 2605 / JCM 1781 / NBRC 1676 / NRRL YB-4239</strain>
    </source>
</reference>
<protein>
    <recommendedName>
        <fullName>WD repeat-containing protein JIP5</fullName>
    </recommendedName>
</protein>
<comment type="subcellular location">
    <subcellularLocation>
        <location evidence="1">Nucleus</location>
        <location evidence="1">Nucleolus</location>
    </subcellularLocation>
</comment>
<comment type="similarity">
    <text evidence="3">Belongs to the WD repeat WDR55 family.</text>
</comment>
<gene>
    <name type="primary">JIP5</name>
    <name type="ORF">LELG_00431</name>
</gene>
<sequence length="584" mass="65777">MGKKKNNSSNAAHVLESSVAPILELNFTDPLFTTAAHPTKPLLISGFATGHLYCNSYNGEKLEELEQVNREKAIERQQKAYEAGTITHVNKSVSQLKSKWWTTFNDIKDVPSKGEELVNVQTNWKTKRHKGSCRHAIFDPRTDCLGDYLYTCGTDNIIKKAATETGKVVGKVDVVADYSSAKDKLTKLCHSTTHPFLLSGTEDGHVLVYDSSNLGGTNKIKFKVELAHDDSINHILSMPAVSPYHYLTLGSTTLSHIDIRKGIITQSDDQEDELLAMSYTTDELSENKNDTVLVSHGEGIITIWKNSKNKLADQLTRIKVNKTASIDAIVPTMNNDDENGMASSVWCGDSEGLLHRVNYKRGRVVETRLHSVARGKSDAVDEVGVLDIDYDYRLISAGMDSLKIWSNRYSDDQEEEEEEEEEEEEEEDSVSGTDSGSDEESFSDISSVDFDSENNDDGEELLDKEQWEDVEDEDIPVGTDGSTRNEENKDNTKSEYILPFKRKRRDFSEVITKPKKKLIDINKLTKPSKKEDDGDDNNKSLQEQEKAEEVPQFKKQKVKEKKVTAKQLRNMQKHEHGIRKFEGL</sequence>
<organism>
    <name type="scientific">Lodderomyces elongisporus (strain ATCC 11503 / CBS 2605 / JCM 1781 / NBRC 1676 / NRRL YB-4239)</name>
    <name type="common">Yeast</name>
    <name type="synonym">Saccharomyces elongisporus</name>
    <dbReference type="NCBI Taxonomy" id="379508"/>
    <lineage>
        <taxon>Eukaryota</taxon>
        <taxon>Fungi</taxon>
        <taxon>Dikarya</taxon>
        <taxon>Ascomycota</taxon>
        <taxon>Saccharomycotina</taxon>
        <taxon>Pichiomycetes</taxon>
        <taxon>Debaryomycetaceae</taxon>
        <taxon>Candida/Lodderomyces clade</taxon>
        <taxon>Lodderomyces</taxon>
    </lineage>
</organism>
<keyword id="KW-0539">Nucleus</keyword>
<keyword id="KW-1185">Reference proteome</keyword>
<keyword id="KW-0677">Repeat</keyword>
<keyword id="KW-0853">WD repeat</keyword>
<evidence type="ECO:0000250" key="1"/>
<evidence type="ECO:0000256" key="2">
    <source>
        <dbReference type="SAM" id="MobiDB-lite"/>
    </source>
</evidence>
<evidence type="ECO:0000305" key="3"/>